<name>MOBA_BACC2</name>
<accession>B7IL24</accession>
<proteinExistence type="inferred from homology"/>
<gene>
    <name evidence="1" type="primary">mobA</name>
    <name type="ordered locus">BCG9842_B0367</name>
</gene>
<keyword id="KW-0963">Cytoplasm</keyword>
<keyword id="KW-0342">GTP-binding</keyword>
<keyword id="KW-0460">Magnesium</keyword>
<keyword id="KW-0479">Metal-binding</keyword>
<keyword id="KW-0501">Molybdenum cofactor biosynthesis</keyword>
<keyword id="KW-0547">Nucleotide-binding</keyword>
<keyword id="KW-0808">Transferase</keyword>
<reference key="1">
    <citation type="submission" date="2008-10" db="EMBL/GenBank/DDBJ databases">
        <title>Genome sequence of Bacillus cereus G9842.</title>
        <authorList>
            <person name="Dodson R.J."/>
            <person name="Durkin A.S."/>
            <person name="Rosovitz M.J."/>
            <person name="Rasko D.A."/>
            <person name="Hoffmaster A."/>
            <person name="Ravel J."/>
            <person name="Sutton G."/>
        </authorList>
    </citation>
    <scope>NUCLEOTIDE SEQUENCE [LARGE SCALE GENOMIC DNA]</scope>
    <source>
        <strain>G9842</strain>
    </source>
</reference>
<dbReference type="EC" id="2.7.7.77" evidence="1"/>
<dbReference type="EMBL" id="CP001186">
    <property type="protein sequence ID" value="ACK95976.1"/>
    <property type="molecule type" value="Genomic_DNA"/>
</dbReference>
<dbReference type="RefSeq" id="WP_000092359.1">
    <property type="nucleotide sequence ID" value="NC_011772.1"/>
</dbReference>
<dbReference type="SMR" id="B7IL24"/>
<dbReference type="KEGG" id="bcg:BCG9842_B0367"/>
<dbReference type="HOGENOM" id="CLU_055597_2_0_9"/>
<dbReference type="Proteomes" id="UP000006744">
    <property type="component" value="Chromosome"/>
</dbReference>
<dbReference type="GO" id="GO:0005737">
    <property type="term" value="C:cytoplasm"/>
    <property type="evidence" value="ECO:0007669"/>
    <property type="project" value="UniProtKB-SubCell"/>
</dbReference>
<dbReference type="GO" id="GO:0005525">
    <property type="term" value="F:GTP binding"/>
    <property type="evidence" value="ECO:0007669"/>
    <property type="project" value="UniProtKB-UniRule"/>
</dbReference>
<dbReference type="GO" id="GO:0046872">
    <property type="term" value="F:metal ion binding"/>
    <property type="evidence" value="ECO:0007669"/>
    <property type="project" value="UniProtKB-KW"/>
</dbReference>
<dbReference type="GO" id="GO:0061603">
    <property type="term" value="F:molybdenum cofactor guanylyltransferase activity"/>
    <property type="evidence" value="ECO:0007669"/>
    <property type="project" value="UniProtKB-EC"/>
</dbReference>
<dbReference type="GO" id="GO:0006777">
    <property type="term" value="P:Mo-molybdopterin cofactor biosynthetic process"/>
    <property type="evidence" value="ECO:0007669"/>
    <property type="project" value="UniProtKB-KW"/>
</dbReference>
<dbReference type="CDD" id="cd02503">
    <property type="entry name" value="MobA"/>
    <property type="match status" value="1"/>
</dbReference>
<dbReference type="FunFam" id="3.90.550.10:FF:000121">
    <property type="entry name" value="Probable molybdenum cofactor guanylyltransferase"/>
    <property type="match status" value="1"/>
</dbReference>
<dbReference type="Gene3D" id="3.90.550.10">
    <property type="entry name" value="Spore Coat Polysaccharide Biosynthesis Protein SpsA, Chain A"/>
    <property type="match status" value="1"/>
</dbReference>
<dbReference type="HAMAP" id="MF_00316">
    <property type="entry name" value="MobA"/>
    <property type="match status" value="1"/>
</dbReference>
<dbReference type="InterPro" id="IPR025877">
    <property type="entry name" value="MobA-like_NTP_Trfase"/>
</dbReference>
<dbReference type="InterPro" id="IPR013482">
    <property type="entry name" value="Molybde_CF_guanTrfase"/>
</dbReference>
<dbReference type="InterPro" id="IPR029044">
    <property type="entry name" value="Nucleotide-diphossugar_trans"/>
</dbReference>
<dbReference type="PANTHER" id="PTHR19136">
    <property type="entry name" value="MOLYBDENUM COFACTOR GUANYLYLTRANSFERASE"/>
    <property type="match status" value="1"/>
</dbReference>
<dbReference type="PANTHER" id="PTHR19136:SF81">
    <property type="entry name" value="MOLYBDENUM COFACTOR GUANYLYLTRANSFERASE"/>
    <property type="match status" value="1"/>
</dbReference>
<dbReference type="Pfam" id="PF12804">
    <property type="entry name" value="NTP_transf_3"/>
    <property type="match status" value="1"/>
</dbReference>
<dbReference type="SUPFAM" id="SSF53448">
    <property type="entry name" value="Nucleotide-diphospho-sugar transferases"/>
    <property type="match status" value="1"/>
</dbReference>
<protein>
    <recommendedName>
        <fullName evidence="1">Probable molybdenum cofactor guanylyltransferase</fullName>
        <shortName evidence="1">MoCo guanylyltransferase</shortName>
        <ecNumber evidence="1">2.7.7.77</ecNumber>
    </recommendedName>
    <alternativeName>
        <fullName evidence="1">GTP:molybdopterin guanylyltransferase</fullName>
    </alternativeName>
    <alternativeName>
        <fullName evidence="1">Mo-MPT guanylyltransferase</fullName>
    </alternativeName>
    <alternativeName>
        <fullName evidence="1">Molybdopterin guanylyltransferase</fullName>
    </alternativeName>
    <alternativeName>
        <fullName evidence="1">Molybdopterin-guanine dinucleotide synthase</fullName>
        <shortName evidence="1">MGD synthase</shortName>
    </alternativeName>
</protein>
<sequence length="200" mass="22594">MSRWAGIVLAGGMSSRFGEPKALASWQGSTFIEHILKEMTSALQEVVVISHSDIKERVEQFVQVPVIEDIPHYKGNGPLAGIVSGMEYIEADWYAIMPCDAPNVSHEWFTILLEQTSNEYDAVVPIINGRKQPLFAAYHNRVKEKIYALLQEEKRSMGQLLSQCNVKYVAGEDVQANTDWFINVNTKEEYVQAQKDLSNE</sequence>
<organism>
    <name type="scientific">Bacillus cereus (strain G9842)</name>
    <dbReference type="NCBI Taxonomy" id="405531"/>
    <lineage>
        <taxon>Bacteria</taxon>
        <taxon>Bacillati</taxon>
        <taxon>Bacillota</taxon>
        <taxon>Bacilli</taxon>
        <taxon>Bacillales</taxon>
        <taxon>Bacillaceae</taxon>
        <taxon>Bacillus</taxon>
        <taxon>Bacillus cereus group</taxon>
    </lineage>
</organism>
<evidence type="ECO:0000255" key="1">
    <source>
        <dbReference type="HAMAP-Rule" id="MF_00316"/>
    </source>
</evidence>
<comment type="function">
    <text evidence="1">Transfers a GMP moiety from GTP to Mo-molybdopterin (Mo-MPT) cofactor (Moco or molybdenum cofactor) to form Mo-molybdopterin guanine dinucleotide (Mo-MGD) cofactor.</text>
</comment>
<comment type="catalytic activity">
    <reaction evidence="1">
        <text>Mo-molybdopterin + GTP + H(+) = Mo-molybdopterin guanine dinucleotide + diphosphate</text>
        <dbReference type="Rhea" id="RHEA:34243"/>
        <dbReference type="ChEBI" id="CHEBI:15378"/>
        <dbReference type="ChEBI" id="CHEBI:33019"/>
        <dbReference type="ChEBI" id="CHEBI:37565"/>
        <dbReference type="ChEBI" id="CHEBI:71302"/>
        <dbReference type="ChEBI" id="CHEBI:71310"/>
        <dbReference type="EC" id="2.7.7.77"/>
    </reaction>
</comment>
<comment type="cofactor">
    <cofactor evidence="1">
        <name>Mg(2+)</name>
        <dbReference type="ChEBI" id="CHEBI:18420"/>
    </cofactor>
</comment>
<comment type="subcellular location">
    <subcellularLocation>
        <location evidence="1">Cytoplasm</location>
    </subcellularLocation>
</comment>
<comment type="domain">
    <text evidence="1">The N-terminal domain determines nucleotide recognition and specific binding, while the C-terminal domain determines the specific binding to the target protein.</text>
</comment>
<comment type="similarity">
    <text evidence="1">Belongs to the MobA family.</text>
</comment>
<feature type="chain" id="PRO_1000119556" description="Probable molybdenum cofactor guanylyltransferase">
    <location>
        <begin position="1"/>
        <end position="200"/>
    </location>
</feature>
<feature type="binding site" evidence="1">
    <location>
        <begin position="9"/>
        <end position="11"/>
    </location>
    <ligand>
        <name>GTP</name>
        <dbReference type="ChEBI" id="CHEBI:37565"/>
    </ligand>
</feature>
<feature type="binding site" evidence="1">
    <location>
        <position position="21"/>
    </location>
    <ligand>
        <name>GTP</name>
        <dbReference type="ChEBI" id="CHEBI:37565"/>
    </ligand>
</feature>
<feature type="binding site" evidence="1">
    <location>
        <position position="69"/>
    </location>
    <ligand>
        <name>GTP</name>
        <dbReference type="ChEBI" id="CHEBI:37565"/>
    </ligand>
</feature>
<feature type="binding site" evidence="1">
    <location>
        <position position="100"/>
    </location>
    <ligand>
        <name>GTP</name>
        <dbReference type="ChEBI" id="CHEBI:37565"/>
    </ligand>
</feature>
<feature type="binding site" evidence="1">
    <location>
        <position position="100"/>
    </location>
    <ligand>
        <name>Mg(2+)</name>
        <dbReference type="ChEBI" id="CHEBI:18420"/>
    </ligand>
</feature>